<dbReference type="EC" id="2.6.1.37" evidence="1"/>
<dbReference type="EMBL" id="CP001177">
    <property type="protein sequence ID" value="ACJ79787.1"/>
    <property type="molecule type" value="Genomic_DNA"/>
</dbReference>
<dbReference type="SMR" id="B7HK48"/>
<dbReference type="KEGG" id="bcr:BCAH187_A1481"/>
<dbReference type="HOGENOM" id="CLU_027686_3_1_9"/>
<dbReference type="Proteomes" id="UP000002214">
    <property type="component" value="Chromosome"/>
</dbReference>
<dbReference type="GO" id="GO:0047304">
    <property type="term" value="F:2-aminoethylphosphonate-pyruvate transaminase activity"/>
    <property type="evidence" value="ECO:0007669"/>
    <property type="project" value="UniProtKB-UniRule"/>
</dbReference>
<dbReference type="GO" id="GO:0019700">
    <property type="term" value="P:organic phosphonate catabolic process"/>
    <property type="evidence" value="ECO:0007669"/>
    <property type="project" value="InterPro"/>
</dbReference>
<dbReference type="Gene3D" id="3.90.1150.10">
    <property type="entry name" value="Aspartate Aminotransferase, domain 1"/>
    <property type="match status" value="1"/>
</dbReference>
<dbReference type="Gene3D" id="3.40.640.10">
    <property type="entry name" value="Type I PLP-dependent aspartate aminotransferase-like (Major domain)"/>
    <property type="match status" value="1"/>
</dbReference>
<dbReference type="HAMAP" id="MF_01376">
    <property type="entry name" value="PhnW_aminotrans_5"/>
    <property type="match status" value="1"/>
</dbReference>
<dbReference type="InterPro" id="IPR000192">
    <property type="entry name" value="Aminotrans_V_dom"/>
</dbReference>
<dbReference type="InterPro" id="IPR012703">
    <property type="entry name" value="NH2EtPonate_pyrv_transaminase"/>
</dbReference>
<dbReference type="InterPro" id="IPR015424">
    <property type="entry name" value="PyrdxlP-dep_Trfase"/>
</dbReference>
<dbReference type="InterPro" id="IPR015421">
    <property type="entry name" value="PyrdxlP-dep_Trfase_major"/>
</dbReference>
<dbReference type="InterPro" id="IPR015422">
    <property type="entry name" value="PyrdxlP-dep_Trfase_small"/>
</dbReference>
<dbReference type="InterPro" id="IPR024169">
    <property type="entry name" value="SP_NH2Trfase/AEP_transaminase"/>
</dbReference>
<dbReference type="NCBIfam" id="TIGR03301">
    <property type="entry name" value="PhnW-AepZ"/>
    <property type="match status" value="1"/>
</dbReference>
<dbReference type="NCBIfam" id="NF010006">
    <property type="entry name" value="PRK13479.1"/>
    <property type="match status" value="1"/>
</dbReference>
<dbReference type="NCBIfam" id="TIGR02326">
    <property type="entry name" value="transamin_PhnW"/>
    <property type="match status" value="1"/>
</dbReference>
<dbReference type="PANTHER" id="PTHR42778">
    <property type="entry name" value="2-AMINOETHYLPHOSPHONATE--PYRUVATE TRANSAMINASE"/>
    <property type="match status" value="1"/>
</dbReference>
<dbReference type="PANTHER" id="PTHR42778:SF1">
    <property type="entry name" value="2-AMINOETHYLPHOSPHONATE--PYRUVATE TRANSAMINASE"/>
    <property type="match status" value="1"/>
</dbReference>
<dbReference type="Pfam" id="PF00266">
    <property type="entry name" value="Aminotran_5"/>
    <property type="match status" value="1"/>
</dbReference>
<dbReference type="PIRSF" id="PIRSF000524">
    <property type="entry name" value="SPT"/>
    <property type="match status" value="1"/>
</dbReference>
<dbReference type="SUPFAM" id="SSF53383">
    <property type="entry name" value="PLP-dependent transferases"/>
    <property type="match status" value="1"/>
</dbReference>
<accession>B7HK48</accession>
<feature type="chain" id="PRO_1000144848" description="2-aminoethylphosphonate--pyruvate transaminase">
    <location>
        <begin position="1"/>
        <end position="365"/>
    </location>
</feature>
<feature type="modified residue" description="N6-(pyridoxal phosphate)lysine" evidence="1">
    <location>
        <position position="194"/>
    </location>
</feature>
<gene>
    <name evidence="1" type="primary">phnW</name>
    <name type="ordered locus">BCAH187_A1481</name>
</gene>
<name>PHNW_BACC7</name>
<evidence type="ECO:0000255" key="1">
    <source>
        <dbReference type="HAMAP-Rule" id="MF_01376"/>
    </source>
</evidence>
<organism>
    <name type="scientific">Bacillus cereus (strain AH187)</name>
    <dbReference type="NCBI Taxonomy" id="405534"/>
    <lineage>
        <taxon>Bacteria</taxon>
        <taxon>Bacillati</taxon>
        <taxon>Bacillota</taxon>
        <taxon>Bacilli</taxon>
        <taxon>Bacillales</taxon>
        <taxon>Bacillaceae</taxon>
        <taxon>Bacillus</taxon>
        <taxon>Bacillus cereus group</taxon>
    </lineage>
</organism>
<proteinExistence type="inferred from homology"/>
<sequence length="365" mass="41458">MTENHYLLLTPGPLTTTKTVKEVMLYDWCTWDVEYNMMVQQVRAKLVSLATKEEERYITVLMQGSGTFSVEAVIGSVIPKNGKMLVCTNGAYGKRIVQMAEMLHIDVVVSQTEEWEPTNIVEVEKILQQDKEITHIAVVHCETTTGIINPIVDVCKLGKQYGKVTLVDAMSSFGGIEIDIAELQIDFLISSANKCIQGVPGFGFVIAKRDELLKCKGQARSLSLDLYDKWETMENQNGKWRFTSPTHVVHAFYQALLELEKEGGVKARYNRYDNNQKLLVNRMREIGFKPLVDEKYQSPIITSFIYPEEWFDFEQLYNELKRDGFVIYPGKISKVDTFRIGNIGDVHEADIHRLVDSIAKGVVIG</sequence>
<reference key="1">
    <citation type="submission" date="2008-10" db="EMBL/GenBank/DDBJ databases">
        <title>Genome sequence of Bacillus cereus AH187.</title>
        <authorList>
            <person name="Dodson R.J."/>
            <person name="Durkin A.S."/>
            <person name="Rosovitz M.J."/>
            <person name="Rasko D.A."/>
            <person name="Kolsto A.B."/>
            <person name="Okstad O.A."/>
            <person name="Ravel J."/>
            <person name="Sutton G."/>
        </authorList>
    </citation>
    <scope>NUCLEOTIDE SEQUENCE [LARGE SCALE GENOMIC DNA]</scope>
    <source>
        <strain>AH187</strain>
    </source>
</reference>
<keyword id="KW-0032">Aminotransferase</keyword>
<keyword id="KW-0663">Pyridoxal phosphate</keyword>
<keyword id="KW-0670">Pyruvate</keyword>
<keyword id="KW-0808">Transferase</keyword>
<protein>
    <recommendedName>
        <fullName evidence="1">2-aminoethylphosphonate--pyruvate transaminase</fullName>
        <ecNumber evidence="1">2.6.1.37</ecNumber>
    </recommendedName>
    <alternativeName>
        <fullName evidence="1">2-aminoethylphosphonate aminotransferase</fullName>
    </alternativeName>
    <alternativeName>
        <fullName evidence="1">AEP transaminase</fullName>
        <shortName evidence="1">AEPT</shortName>
    </alternativeName>
</protein>
<comment type="function">
    <text evidence="1">Involved in phosphonate degradation.</text>
</comment>
<comment type="catalytic activity">
    <reaction evidence="1">
        <text>(2-aminoethyl)phosphonate + pyruvate = phosphonoacetaldehyde + L-alanine</text>
        <dbReference type="Rhea" id="RHEA:17021"/>
        <dbReference type="ChEBI" id="CHEBI:15361"/>
        <dbReference type="ChEBI" id="CHEBI:57418"/>
        <dbReference type="ChEBI" id="CHEBI:57972"/>
        <dbReference type="ChEBI" id="CHEBI:58383"/>
        <dbReference type="EC" id="2.6.1.37"/>
    </reaction>
</comment>
<comment type="cofactor">
    <cofactor evidence="1">
        <name>pyridoxal 5'-phosphate</name>
        <dbReference type="ChEBI" id="CHEBI:597326"/>
    </cofactor>
</comment>
<comment type="subunit">
    <text evidence="1">Homodimer.</text>
</comment>
<comment type="similarity">
    <text evidence="1">Belongs to the class-V pyridoxal-phosphate-dependent aminotransferase family. PhnW subfamily.</text>
</comment>